<comment type="function">
    <text evidence="1">This protein binds to the 23S rRNA, and is important in its secondary structure. It is located near the subunit interface in the base of the L7/L12 stalk, and near the tRNA binding site of the peptidyltransferase center.</text>
</comment>
<comment type="subunit">
    <text evidence="1">Part of the 50S ribosomal subunit.</text>
</comment>
<comment type="similarity">
    <text evidence="1">Belongs to the universal ribosomal protein uL6 family.</text>
</comment>
<keyword id="KW-0687">Ribonucleoprotein</keyword>
<keyword id="KW-0689">Ribosomal protein</keyword>
<keyword id="KW-0694">RNA-binding</keyword>
<keyword id="KW-0699">rRNA-binding</keyword>
<reference key="1">
    <citation type="journal article" date="2005" name="BMC Genomics">
        <title>Bacterial genome adaptation to niches: divergence of the potential virulence genes in three Burkholderia species of different survival strategies.</title>
        <authorList>
            <person name="Kim H.S."/>
            <person name="Schell M.A."/>
            <person name="Yu Y."/>
            <person name="Ulrich R.L."/>
            <person name="Sarria S.H."/>
            <person name="Nierman W.C."/>
            <person name="DeShazer D."/>
        </authorList>
    </citation>
    <scope>NUCLEOTIDE SEQUENCE [LARGE SCALE GENOMIC DNA]</scope>
    <source>
        <strain>ATCC 700388 / DSM 13276 / CCUG 48851 / CIP 106301 / E264</strain>
    </source>
</reference>
<dbReference type="EMBL" id="CP000086">
    <property type="protein sequence ID" value="ABC37130.1"/>
    <property type="molecule type" value="Genomic_DNA"/>
</dbReference>
<dbReference type="RefSeq" id="WP_009888397.1">
    <property type="nucleotide sequence ID" value="NZ_CP008786.1"/>
</dbReference>
<dbReference type="SMR" id="Q2SU42"/>
<dbReference type="GeneID" id="45122741"/>
<dbReference type="KEGG" id="bte:BTH_I3053"/>
<dbReference type="HOGENOM" id="CLU_065464_1_2_4"/>
<dbReference type="Proteomes" id="UP000001930">
    <property type="component" value="Chromosome I"/>
</dbReference>
<dbReference type="GO" id="GO:0022625">
    <property type="term" value="C:cytosolic large ribosomal subunit"/>
    <property type="evidence" value="ECO:0007669"/>
    <property type="project" value="TreeGrafter"/>
</dbReference>
<dbReference type="GO" id="GO:0019843">
    <property type="term" value="F:rRNA binding"/>
    <property type="evidence" value="ECO:0007669"/>
    <property type="project" value="UniProtKB-UniRule"/>
</dbReference>
<dbReference type="GO" id="GO:0003735">
    <property type="term" value="F:structural constituent of ribosome"/>
    <property type="evidence" value="ECO:0007669"/>
    <property type="project" value="InterPro"/>
</dbReference>
<dbReference type="GO" id="GO:0002181">
    <property type="term" value="P:cytoplasmic translation"/>
    <property type="evidence" value="ECO:0007669"/>
    <property type="project" value="TreeGrafter"/>
</dbReference>
<dbReference type="FunFam" id="3.90.930.12:FF:000001">
    <property type="entry name" value="50S ribosomal protein L6"/>
    <property type="match status" value="1"/>
</dbReference>
<dbReference type="Gene3D" id="3.90.930.12">
    <property type="entry name" value="Ribosomal protein L6, alpha-beta domain"/>
    <property type="match status" value="2"/>
</dbReference>
<dbReference type="HAMAP" id="MF_01365_B">
    <property type="entry name" value="Ribosomal_uL6_B"/>
    <property type="match status" value="1"/>
</dbReference>
<dbReference type="InterPro" id="IPR000702">
    <property type="entry name" value="Ribosomal_uL6-like"/>
</dbReference>
<dbReference type="InterPro" id="IPR036789">
    <property type="entry name" value="Ribosomal_uL6-like_a/b-dom_sf"/>
</dbReference>
<dbReference type="InterPro" id="IPR020040">
    <property type="entry name" value="Ribosomal_uL6_a/b-dom"/>
</dbReference>
<dbReference type="InterPro" id="IPR019906">
    <property type="entry name" value="Ribosomal_uL6_bac-type"/>
</dbReference>
<dbReference type="InterPro" id="IPR002358">
    <property type="entry name" value="Ribosomal_uL6_CS"/>
</dbReference>
<dbReference type="NCBIfam" id="TIGR03654">
    <property type="entry name" value="L6_bact"/>
    <property type="match status" value="1"/>
</dbReference>
<dbReference type="PANTHER" id="PTHR11655">
    <property type="entry name" value="60S/50S RIBOSOMAL PROTEIN L6/L9"/>
    <property type="match status" value="1"/>
</dbReference>
<dbReference type="PANTHER" id="PTHR11655:SF14">
    <property type="entry name" value="LARGE RIBOSOMAL SUBUNIT PROTEIN UL6M"/>
    <property type="match status" value="1"/>
</dbReference>
<dbReference type="Pfam" id="PF00347">
    <property type="entry name" value="Ribosomal_L6"/>
    <property type="match status" value="2"/>
</dbReference>
<dbReference type="PIRSF" id="PIRSF002162">
    <property type="entry name" value="Ribosomal_L6"/>
    <property type="match status" value="1"/>
</dbReference>
<dbReference type="PRINTS" id="PR00059">
    <property type="entry name" value="RIBOSOMALL6"/>
</dbReference>
<dbReference type="SUPFAM" id="SSF56053">
    <property type="entry name" value="Ribosomal protein L6"/>
    <property type="match status" value="2"/>
</dbReference>
<dbReference type="PROSITE" id="PS00525">
    <property type="entry name" value="RIBOSOMAL_L6_1"/>
    <property type="match status" value="1"/>
</dbReference>
<organism>
    <name type="scientific">Burkholderia thailandensis (strain ATCC 700388 / DSM 13276 / CCUG 48851 / CIP 106301 / E264)</name>
    <dbReference type="NCBI Taxonomy" id="271848"/>
    <lineage>
        <taxon>Bacteria</taxon>
        <taxon>Pseudomonadati</taxon>
        <taxon>Pseudomonadota</taxon>
        <taxon>Betaproteobacteria</taxon>
        <taxon>Burkholderiales</taxon>
        <taxon>Burkholderiaceae</taxon>
        <taxon>Burkholderia</taxon>
        <taxon>pseudomallei group</taxon>
    </lineage>
</organism>
<feature type="chain" id="PRO_0000265235" description="Large ribosomal subunit protein uL6">
    <location>
        <begin position="1"/>
        <end position="176"/>
    </location>
</feature>
<sequence length="176" mass="18743">MSRVGKSPIALQGAEVKLADGSITVKGPLGTITQAVNPLVNVANNDGTLNLSPVDDSREANALSGTMRAIIANMVQGVTKGFERKLTLVGVGYRAQAQGDKLNLSLGFSHPVVHQMPEGIKAETPTQTEIVIKGIDKQKVGQVAAEVRGYRPPEPYKGKGVRYADEVVILKETKKK</sequence>
<proteinExistence type="inferred from homology"/>
<evidence type="ECO:0000255" key="1">
    <source>
        <dbReference type="HAMAP-Rule" id="MF_01365"/>
    </source>
</evidence>
<evidence type="ECO:0000305" key="2"/>
<name>RL6_BURTA</name>
<protein>
    <recommendedName>
        <fullName evidence="1">Large ribosomal subunit protein uL6</fullName>
    </recommendedName>
    <alternativeName>
        <fullName evidence="2">50S ribosomal protein L6</fullName>
    </alternativeName>
</protein>
<accession>Q2SU42</accession>
<gene>
    <name evidence="1" type="primary">rplF</name>
    <name type="ordered locus">BTH_I3053</name>
</gene>